<reference key="1">
    <citation type="submission" date="2006-08" db="EMBL/GenBank/DDBJ databases">
        <title>Complete sequence of Alkalilimnicola ehrilichei MLHE-1.</title>
        <authorList>
            <person name="Copeland A."/>
            <person name="Lucas S."/>
            <person name="Lapidus A."/>
            <person name="Barry K."/>
            <person name="Detter J.C."/>
            <person name="Glavina del Rio T."/>
            <person name="Hammon N."/>
            <person name="Israni S."/>
            <person name="Dalin E."/>
            <person name="Tice H."/>
            <person name="Pitluck S."/>
            <person name="Sims D."/>
            <person name="Brettin T."/>
            <person name="Bruce D."/>
            <person name="Han C."/>
            <person name="Tapia R."/>
            <person name="Gilna P."/>
            <person name="Schmutz J."/>
            <person name="Larimer F."/>
            <person name="Land M."/>
            <person name="Hauser L."/>
            <person name="Kyrpides N."/>
            <person name="Mikhailova N."/>
            <person name="Oremland R.S."/>
            <person name="Hoeft S.E."/>
            <person name="Switzer-Blum J."/>
            <person name="Kulp T."/>
            <person name="King G."/>
            <person name="Tabita R."/>
            <person name="Witte B."/>
            <person name="Santini J.M."/>
            <person name="Basu P."/>
            <person name="Hollibaugh J.T."/>
            <person name="Xie G."/>
            <person name="Stolz J.F."/>
            <person name="Richardson P."/>
        </authorList>
    </citation>
    <scope>NUCLEOTIDE SEQUENCE [LARGE SCALE GENOMIC DNA]</scope>
    <source>
        <strain>ATCC BAA-1101 / DSM 17681 / MLHE-1</strain>
    </source>
</reference>
<name>NFI_ALKEH</name>
<comment type="function">
    <text evidence="1">DNA repair enzyme involved in the repair of deaminated bases. Selectively cleaves double-stranded DNA at the second phosphodiester bond 3' to a deoxyinosine leaving behind the intact lesion on the nicked DNA.</text>
</comment>
<comment type="catalytic activity">
    <reaction evidence="1">
        <text>Endonucleolytic cleavage at apurinic or apyrimidinic sites to products with a 5'-phosphate.</text>
        <dbReference type="EC" id="3.1.21.7"/>
    </reaction>
</comment>
<comment type="cofactor">
    <cofactor evidence="1">
        <name>Mg(2+)</name>
        <dbReference type="ChEBI" id="CHEBI:18420"/>
    </cofactor>
</comment>
<comment type="subcellular location">
    <subcellularLocation>
        <location evidence="1">Cytoplasm</location>
    </subcellularLocation>
</comment>
<comment type="similarity">
    <text evidence="1">Belongs to the endonuclease V family.</text>
</comment>
<protein>
    <recommendedName>
        <fullName evidence="1">Endonuclease V</fullName>
        <ecNumber evidence="1">3.1.21.7</ecNumber>
    </recommendedName>
    <alternativeName>
        <fullName evidence="1">Deoxyinosine 3'endonuclease</fullName>
    </alternativeName>
    <alternativeName>
        <fullName evidence="1">Deoxyribonuclease V</fullName>
        <shortName evidence="1">DNase V</shortName>
    </alternativeName>
</protein>
<keyword id="KW-0963">Cytoplasm</keyword>
<keyword id="KW-0227">DNA damage</keyword>
<keyword id="KW-0234">DNA repair</keyword>
<keyword id="KW-0255">Endonuclease</keyword>
<keyword id="KW-0378">Hydrolase</keyword>
<keyword id="KW-0460">Magnesium</keyword>
<keyword id="KW-0479">Metal-binding</keyword>
<keyword id="KW-0540">Nuclease</keyword>
<keyword id="KW-1185">Reference proteome</keyword>
<accession>Q0A5M1</accession>
<sequence length="227" mass="24621">MGVSIRALHPWAVDAAEGRRLQQTLREQLCLKTPRGFRPRLVAGVDAGVVDGGRTIRAAVVVMSLPDLAVVTQSVARAPAIMPYVPGLLSFRELPGVVRALEQLDVTPELLLCDGQGIAHPRRLGIAAHLGLITDLPAIGVGKSRLVGTYREPRPEKGATSGLYDGHERIGTVLRSRDHVRPLYVSPGHRISHEDAVHWVLTCCTRYRLPEPQRAADRLASAKEAPA</sequence>
<gene>
    <name evidence="1" type="primary">nfi</name>
    <name type="ordered locus">Mlg_2526</name>
</gene>
<organism>
    <name type="scientific">Alkalilimnicola ehrlichii (strain ATCC BAA-1101 / DSM 17681 / MLHE-1)</name>
    <dbReference type="NCBI Taxonomy" id="187272"/>
    <lineage>
        <taxon>Bacteria</taxon>
        <taxon>Pseudomonadati</taxon>
        <taxon>Pseudomonadota</taxon>
        <taxon>Gammaproteobacteria</taxon>
        <taxon>Chromatiales</taxon>
        <taxon>Ectothiorhodospiraceae</taxon>
        <taxon>Alkalilimnicola</taxon>
    </lineage>
</organism>
<dbReference type="EC" id="3.1.21.7" evidence="1"/>
<dbReference type="EMBL" id="CP000453">
    <property type="protein sequence ID" value="ABI57866.1"/>
    <property type="molecule type" value="Genomic_DNA"/>
</dbReference>
<dbReference type="RefSeq" id="WP_011630259.1">
    <property type="nucleotide sequence ID" value="NC_008340.1"/>
</dbReference>
<dbReference type="SMR" id="Q0A5M1"/>
<dbReference type="KEGG" id="aeh:Mlg_2526"/>
<dbReference type="eggNOG" id="COG1515">
    <property type="taxonomic scope" value="Bacteria"/>
</dbReference>
<dbReference type="HOGENOM" id="CLU_047631_1_1_6"/>
<dbReference type="OrthoDB" id="9790916at2"/>
<dbReference type="Proteomes" id="UP000001962">
    <property type="component" value="Chromosome"/>
</dbReference>
<dbReference type="GO" id="GO:0005737">
    <property type="term" value="C:cytoplasm"/>
    <property type="evidence" value="ECO:0007669"/>
    <property type="project" value="UniProtKB-SubCell"/>
</dbReference>
<dbReference type="GO" id="GO:0043737">
    <property type="term" value="F:deoxyribonuclease V activity"/>
    <property type="evidence" value="ECO:0007669"/>
    <property type="project" value="UniProtKB-UniRule"/>
</dbReference>
<dbReference type="GO" id="GO:0000287">
    <property type="term" value="F:magnesium ion binding"/>
    <property type="evidence" value="ECO:0007669"/>
    <property type="project" value="UniProtKB-UniRule"/>
</dbReference>
<dbReference type="GO" id="GO:0016891">
    <property type="term" value="F:RNA endonuclease activity, producing 5'-phosphomonoesters"/>
    <property type="evidence" value="ECO:0007669"/>
    <property type="project" value="TreeGrafter"/>
</dbReference>
<dbReference type="GO" id="GO:0003727">
    <property type="term" value="F:single-stranded RNA binding"/>
    <property type="evidence" value="ECO:0007669"/>
    <property type="project" value="TreeGrafter"/>
</dbReference>
<dbReference type="GO" id="GO:0006281">
    <property type="term" value="P:DNA repair"/>
    <property type="evidence" value="ECO:0007669"/>
    <property type="project" value="UniProtKB-UniRule"/>
</dbReference>
<dbReference type="CDD" id="cd06559">
    <property type="entry name" value="Endonuclease_V"/>
    <property type="match status" value="1"/>
</dbReference>
<dbReference type="Gene3D" id="3.30.2170.10">
    <property type="entry name" value="archaeoglobus fulgidus dsm 4304 superfamily"/>
    <property type="match status" value="1"/>
</dbReference>
<dbReference type="HAMAP" id="MF_00801">
    <property type="entry name" value="Endonuclease_5"/>
    <property type="match status" value="1"/>
</dbReference>
<dbReference type="InterPro" id="IPR007581">
    <property type="entry name" value="Endonuclease-V"/>
</dbReference>
<dbReference type="NCBIfam" id="NF008629">
    <property type="entry name" value="PRK11617.1"/>
    <property type="match status" value="1"/>
</dbReference>
<dbReference type="PANTHER" id="PTHR28511">
    <property type="entry name" value="ENDONUCLEASE V"/>
    <property type="match status" value="1"/>
</dbReference>
<dbReference type="PANTHER" id="PTHR28511:SF1">
    <property type="entry name" value="ENDONUCLEASE V"/>
    <property type="match status" value="1"/>
</dbReference>
<dbReference type="Pfam" id="PF04493">
    <property type="entry name" value="Endonuclease_5"/>
    <property type="match status" value="1"/>
</dbReference>
<proteinExistence type="inferred from homology"/>
<feature type="chain" id="PRO_1000046990" description="Endonuclease V">
    <location>
        <begin position="1"/>
        <end position="227"/>
    </location>
</feature>
<feature type="binding site" evidence="1">
    <location>
        <position position="46"/>
    </location>
    <ligand>
        <name>Mg(2+)</name>
        <dbReference type="ChEBI" id="CHEBI:18420"/>
    </ligand>
</feature>
<feature type="binding site" evidence="1">
    <location>
        <position position="114"/>
    </location>
    <ligand>
        <name>Mg(2+)</name>
        <dbReference type="ChEBI" id="CHEBI:18420"/>
    </ligand>
</feature>
<feature type="site" description="Interaction with target DNA" evidence="1">
    <location>
        <position position="84"/>
    </location>
</feature>
<evidence type="ECO:0000255" key="1">
    <source>
        <dbReference type="HAMAP-Rule" id="MF_00801"/>
    </source>
</evidence>